<keyword id="KW-0963">Cytoplasm</keyword>
<keyword id="KW-0238">DNA-binding</keyword>
<accession>C0Q809</accession>
<feature type="chain" id="PRO_1000197674" description="Nucleoid-associated protein YbaB">
    <location>
        <begin position="1"/>
        <end position="109"/>
    </location>
</feature>
<name>YBAB_SALPC</name>
<evidence type="ECO:0000255" key="1">
    <source>
        <dbReference type="HAMAP-Rule" id="MF_00274"/>
    </source>
</evidence>
<protein>
    <recommendedName>
        <fullName evidence="1">Nucleoid-associated protein YbaB</fullName>
    </recommendedName>
</protein>
<dbReference type="EMBL" id="CP000857">
    <property type="protein sequence ID" value="ACN44679.1"/>
    <property type="molecule type" value="Genomic_DNA"/>
</dbReference>
<dbReference type="RefSeq" id="WP_000467098.1">
    <property type="nucleotide sequence ID" value="NC_012125.1"/>
</dbReference>
<dbReference type="SMR" id="C0Q809"/>
<dbReference type="KEGG" id="sei:SPC_0499"/>
<dbReference type="HOGENOM" id="CLU_140930_0_0_6"/>
<dbReference type="Proteomes" id="UP000001599">
    <property type="component" value="Chromosome"/>
</dbReference>
<dbReference type="GO" id="GO:0043590">
    <property type="term" value="C:bacterial nucleoid"/>
    <property type="evidence" value="ECO:0007669"/>
    <property type="project" value="UniProtKB-UniRule"/>
</dbReference>
<dbReference type="GO" id="GO:0005829">
    <property type="term" value="C:cytosol"/>
    <property type="evidence" value="ECO:0007669"/>
    <property type="project" value="TreeGrafter"/>
</dbReference>
<dbReference type="GO" id="GO:0003677">
    <property type="term" value="F:DNA binding"/>
    <property type="evidence" value="ECO:0007669"/>
    <property type="project" value="UniProtKB-UniRule"/>
</dbReference>
<dbReference type="FunFam" id="3.30.1310.10:FF:000001">
    <property type="entry name" value="Nucleoid-associated protein YbaB"/>
    <property type="match status" value="1"/>
</dbReference>
<dbReference type="Gene3D" id="3.30.1310.10">
    <property type="entry name" value="Nucleoid-associated protein YbaB-like domain"/>
    <property type="match status" value="1"/>
</dbReference>
<dbReference type="HAMAP" id="MF_00274">
    <property type="entry name" value="DNA_YbaB_EbfC"/>
    <property type="match status" value="1"/>
</dbReference>
<dbReference type="InterPro" id="IPR036894">
    <property type="entry name" value="YbaB-like_sf"/>
</dbReference>
<dbReference type="InterPro" id="IPR004401">
    <property type="entry name" value="YbaB/EbfC"/>
</dbReference>
<dbReference type="NCBIfam" id="TIGR00103">
    <property type="entry name" value="DNA_YbaB_EbfC"/>
    <property type="match status" value="1"/>
</dbReference>
<dbReference type="PANTHER" id="PTHR33449">
    <property type="entry name" value="NUCLEOID-ASSOCIATED PROTEIN YBAB"/>
    <property type="match status" value="1"/>
</dbReference>
<dbReference type="PANTHER" id="PTHR33449:SF1">
    <property type="entry name" value="NUCLEOID-ASSOCIATED PROTEIN YBAB"/>
    <property type="match status" value="1"/>
</dbReference>
<dbReference type="Pfam" id="PF02575">
    <property type="entry name" value="YbaB_DNA_bd"/>
    <property type="match status" value="1"/>
</dbReference>
<dbReference type="PIRSF" id="PIRSF004555">
    <property type="entry name" value="UCP004555"/>
    <property type="match status" value="1"/>
</dbReference>
<dbReference type="SUPFAM" id="SSF82607">
    <property type="entry name" value="YbaB-like"/>
    <property type="match status" value="1"/>
</dbReference>
<sequence length="109" mass="12015">MFGKGGLGNLMKQAQQMQEKMQKMQEEIAQLEVTGESGAGLVKVTINGAHNCRRVEIDPSLLEDDKEMLEDLVAAAFNDAARRIEETQKEKMASVSSGMQLPPGFKMPF</sequence>
<reference key="1">
    <citation type="journal article" date="2009" name="PLoS ONE">
        <title>Salmonella paratyphi C: genetic divergence from Salmonella choleraesuis and pathogenic convergence with Salmonella typhi.</title>
        <authorList>
            <person name="Liu W.-Q."/>
            <person name="Feng Y."/>
            <person name="Wang Y."/>
            <person name="Zou Q.-H."/>
            <person name="Chen F."/>
            <person name="Guo J.-T."/>
            <person name="Peng Y.-H."/>
            <person name="Jin Y."/>
            <person name="Li Y.-G."/>
            <person name="Hu S.-N."/>
            <person name="Johnston R.N."/>
            <person name="Liu G.-R."/>
            <person name="Liu S.-L."/>
        </authorList>
    </citation>
    <scope>NUCLEOTIDE SEQUENCE [LARGE SCALE GENOMIC DNA]</scope>
    <source>
        <strain>RKS4594</strain>
    </source>
</reference>
<proteinExistence type="inferred from homology"/>
<comment type="function">
    <text evidence="1">Binds to DNA and alters its conformation. May be involved in regulation of gene expression, nucleoid organization and DNA protection.</text>
</comment>
<comment type="subunit">
    <text evidence="1">Homodimer.</text>
</comment>
<comment type="subcellular location">
    <subcellularLocation>
        <location evidence="1">Cytoplasm</location>
        <location evidence="1">Nucleoid</location>
    </subcellularLocation>
</comment>
<comment type="similarity">
    <text evidence="1">Belongs to the YbaB/EbfC family.</text>
</comment>
<organism>
    <name type="scientific">Salmonella paratyphi C (strain RKS4594)</name>
    <dbReference type="NCBI Taxonomy" id="476213"/>
    <lineage>
        <taxon>Bacteria</taxon>
        <taxon>Pseudomonadati</taxon>
        <taxon>Pseudomonadota</taxon>
        <taxon>Gammaproteobacteria</taxon>
        <taxon>Enterobacterales</taxon>
        <taxon>Enterobacteriaceae</taxon>
        <taxon>Salmonella</taxon>
    </lineage>
</organism>
<gene>
    <name evidence="1" type="primary">ybaB</name>
    <name type="ordered locus">SPC_0499</name>
</gene>